<sequence>MDAALLLNVEGVKKTILHGGTGELPNFITGSRVIFHFRTMKCDEERTVIDDSREVGQPMHIIIGNMFKLEVWEILLTSMRVREVAEFWCDTIHTGVYPILSRSLRQMAQGKDPTEWHVHTCGLANMFAYHTLGYEDLDELQKEPQPLIFVIELLQVDAPSDYQRETWNLSNHEKMKVVPVLHGEGNRLFKLGRYEEASSKYQEAIICLRNLQTKEKPWEVQWLKLEKMINTLILNYCQCLLKKEEYYEVLEHTSDILRHHPGIVKAYYVRARAHAEVWNEAEAKADLQKVLELEPSMQKAVRRELRLLENRMAEKQEEERLRCRNMLSQGATWSPAEPPAEPPAESSTEPPAEPPAEPPAELTLTPGHPLQH</sequence>
<name>AIPL1_SAIBB</name>
<accession>Q95MN7</accession>
<reference key="1">
    <citation type="journal article" date="2001" name="Mamm. Genome">
        <title>Comparative analysis of aryl-hydrocarbon receptor interacting protein-like 1 (Aipl1), a gene associated with inherited retinal disease in humans.</title>
        <authorList>
            <person name="Sohocki M.M."/>
            <person name="Sullivan L.S."/>
            <person name="Tirpak D.L."/>
            <person name="Daiger S.P."/>
        </authorList>
    </citation>
    <scope>NUCLEOTIDE SEQUENCE [MRNA]</scope>
</reference>
<evidence type="ECO:0000250" key="1"/>
<evidence type="ECO:0000256" key="2">
    <source>
        <dbReference type="SAM" id="MobiDB-lite"/>
    </source>
</evidence>
<comment type="function">
    <text evidence="1">May be important in protein trafficking and/or protein folding and stabilization.</text>
</comment>
<comment type="subunit">
    <text evidence="1">Interacts with NUB1.</text>
</comment>
<comment type="subcellular location">
    <subcellularLocation>
        <location evidence="1">Cytoplasm</location>
    </subcellularLocation>
    <subcellularLocation>
        <location evidence="1">Nucleus</location>
    </subcellularLocation>
</comment>
<dbReference type="EMBL" id="AF296415">
    <property type="protein sequence ID" value="AAK77959.1"/>
    <property type="molecule type" value="mRNA"/>
</dbReference>
<dbReference type="RefSeq" id="NP_001266889.1">
    <property type="nucleotide sequence ID" value="NM_001279960.1"/>
</dbReference>
<dbReference type="SMR" id="Q95MN7"/>
<dbReference type="STRING" id="39432.ENSSBOP00000013223"/>
<dbReference type="GeneID" id="101051406"/>
<dbReference type="CTD" id="23746"/>
<dbReference type="Proteomes" id="UP000233220">
    <property type="component" value="Whole Genome Shotgun Assembly"/>
</dbReference>
<dbReference type="GO" id="GO:0005737">
    <property type="term" value="C:cytoplasm"/>
    <property type="evidence" value="ECO:0007669"/>
    <property type="project" value="UniProtKB-SubCell"/>
</dbReference>
<dbReference type="GO" id="GO:0005634">
    <property type="term" value="C:nucleus"/>
    <property type="evidence" value="ECO:0007669"/>
    <property type="project" value="UniProtKB-SubCell"/>
</dbReference>
<dbReference type="GO" id="GO:0003755">
    <property type="term" value="F:peptidyl-prolyl cis-trans isomerase activity"/>
    <property type="evidence" value="ECO:0007669"/>
    <property type="project" value="InterPro"/>
</dbReference>
<dbReference type="FunFam" id="1.25.40.10:FF:000052">
    <property type="entry name" value="Aryl-hydrocarbon-interacting protein-like 1"/>
    <property type="match status" value="1"/>
</dbReference>
<dbReference type="FunFam" id="3.10.50.40:FF:000018">
    <property type="entry name" value="Aryl-hydrocarbon-interacting protein-like 1"/>
    <property type="match status" value="1"/>
</dbReference>
<dbReference type="Gene3D" id="3.10.50.40">
    <property type="match status" value="1"/>
</dbReference>
<dbReference type="Gene3D" id="1.25.40.10">
    <property type="entry name" value="Tetratricopeptide repeat domain"/>
    <property type="match status" value="1"/>
</dbReference>
<dbReference type="InterPro" id="IPR039663">
    <property type="entry name" value="AIP/AIPL1/TTC9"/>
</dbReference>
<dbReference type="InterPro" id="IPR056277">
    <property type="entry name" value="PPIase_AIP"/>
</dbReference>
<dbReference type="InterPro" id="IPR046357">
    <property type="entry name" value="PPIase_dom_sf"/>
</dbReference>
<dbReference type="InterPro" id="IPR011990">
    <property type="entry name" value="TPR-like_helical_dom_sf"/>
</dbReference>
<dbReference type="InterPro" id="IPR019734">
    <property type="entry name" value="TPR_rpt"/>
</dbReference>
<dbReference type="PANTHER" id="PTHR11242">
    <property type="entry name" value="ARYL HYDROCARBON RECEPTOR INTERACTING PROTEIN RELATED"/>
    <property type="match status" value="1"/>
</dbReference>
<dbReference type="PANTHER" id="PTHR11242:SF2">
    <property type="entry name" value="ARYL-HYDROCARBON-INTERACTING PROTEIN-LIKE 1"/>
    <property type="match status" value="1"/>
</dbReference>
<dbReference type="Pfam" id="PF23322">
    <property type="entry name" value="PPIase_AIP"/>
    <property type="match status" value="1"/>
</dbReference>
<dbReference type="SMART" id="SM00028">
    <property type="entry name" value="TPR"/>
    <property type="match status" value="2"/>
</dbReference>
<dbReference type="SUPFAM" id="SSF54534">
    <property type="entry name" value="FKBP-like"/>
    <property type="match status" value="1"/>
</dbReference>
<dbReference type="SUPFAM" id="SSF48452">
    <property type="entry name" value="TPR-like"/>
    <property type="match status" value="1"/>
</dbReference>
<dbReference type="PROSITE" id="PS50293">
    <property type="entry name" value="TPR_REGION"/>
    <property type="match status" value="2"/>
</dbReference>
<keyword id="KW-0963">Cytoplasm</keyword>
<keyword id="KW-0539">Nucleus</keyword>
<keyword id="KW-1185">Reference proteome</keyword>
<keyword id="KW-0677">Repeat</keyword>
<keyword id="KW-0802">TPR repeat</keyword>
<gene>
    <name type="primary">AIPL1</name>
</gene>
<proteinExistence type="evidence at transcript level"/>
<protein>
    <recommendedName>
        <fullName>Aryl-hydrocarbon-interacting protein-like 1</fullName>
    </recommendedName>
</protein>
<feature type="chain" id="PRO_0000075348" description="Aryl-hydrocarbon-interacting protein-like 1">
    <location>
        <begin position="1"/>
        <end position="372"/>
    </location>
</feature>
<feature type="domain" description="PPIase FKBP-type">
    <location>
        <begin position="53"/>
        <end position="145"/>
    </location>
</feature>
<feature type="repeat" description="TPR 1">
    <location>
        <begin position="178"/>
        <end position="211"/>
    </location>
</feature>
<feature type="repeat" description="TPR 2">
    <location>
        <begin position="230"/>
        <end position="263"/>
    </location>
</feature>
<feature type="repeat" description="TPR 3">
    <location>
        <begin position="264"/>
        <end position="297"/>
    </location>
</feature>
<feature type="region of interest" description="Disordered" evidence="2">
    <location>
        <begin position="325"/>
        <end position="372"/>
    </location>
</feature>
<organism>
    <name type="scientific">Saimiri boliviensis boliviensis</name>
    <name type="common">Bolivian squirrel monkey</name>
    <dbReference type="NCBI Taxonomy" id="39432"/>
    <lineage>
        <taxon>Eukaryota</taxon>
        <taxon>Metazoa</taxon>
        <taxon>Chordata</taxon>
        <taxon>Craniata</taxon>
        <taxon>Vertebrata</taxon>
        <taxon>Euteleostomi</taxon>
        <taxon>Mammalia</taxon>
        <taxon>Eutheria</taxon>
        <taxon>Euarchontoglires</taxon>
        <taxon>Primates</taxon>
        <taxon>Haplorrhini</taxon>
        <taxon>Platyrrhini</taxon>
        <taxon>Cebidae</taxon>
        <taxon>Saimiriinae</taxon>
        <taxon>Saimiri</taxon>
    </lineage>
</organism>